<proteinExistence type="inferred from homology"/>
<gene>
    <name evidence="1" type="primary">rpsJ</name>
    <name type="ordered locus">HNE_2852</name>
</gene>
<organism>
    <name type="scientific">Hyphomonas neptunium (strain ATCC 15444)</name>
    <dbReference type="NCBI Taxonomy" id="228405"/>
    <lineage>
        <taxon>Bacteria</taxon>
        <taxon>Pseudomonadati</taxon>
        <taxon>Pseudomonadota</taxon>
        <taxon>Alphaproteobacteria</taxon>
        <taxon>Hyphomonadales</taxon>
        <taxon>Hyphomonadaceae</taxon>
        <taxon>Hyphomonas</taxon>
    </lineage>
</organism>
<name>RS10_HYPNA</name>
<keyword id="KW-1185">Reference proteome</keyword>
<keyword id="KW-0687">Ribonucleoprotein</keyword>
<keyword id="KW-0689">Ribosomal protein</keyword>
<comment type="function">
    <text evidence="1">Involved in the binding of tRNA to the ribosomes.</text>
</comment>
<comment type="subunit">
    <text evidence="1">Part of the 30S ribosomal subunit.</text>
</comment>
<comment type="similarity">
    <text evidence="1">Belongs to the universal ribosomal protein uS10 family.</text>
</comment>
<feature type="chain" id="PRO_1000015035" description="Small ribosomal subunit protein uS10">
    <location>
        <begin position="1"/>
        <end position="106"/>
    </location>
</feature>
<reference key="1">
    <citation type="journal article" date="2006" name="J. Bacteriol.">
        <title>Comparative genomic evidence for a close relationship between the dimorphic prosthecate bacteria Hyphomonas neptunium and Caulobacter crescentus.</title>
        <authorList>
            <person name="Badger J.H."/>
            <person name="Hoover T.R."/>
            <person name="Brun Y.V."/>
            <person name="Weiner R.M."/>
            <person name="Laub M.T."/>
            <person name="Alexandre G."/>
            <person name="Mrazek J."/>
            <person name="Ren Q."/>
            <person name="Paulsen I.T."/>
            <person name="Nelson K.E."/>
            <person name="Khouri H.M."/>
            <person name="Radune D."/>
            <person name="Sosa J."/>
            <person name="Dodson R.J."/>
            <person name="Sullivan S.A."/>
            <person name="Rosovitz M.J."/>
            <person name="Madupu R."/>
            <person name="Brinkac L.M."/>
            <person name="Durkin A.S."/>
            <person name="Daugherty S.C."/>
            <person name="Kothari S.P."/>
            <person name="Giglio M.G."/>
            <person name="Zhou L."/>
            <person name="Haft D.H."/>
            <person name="Selengut J.D."/>
            <person name="Davidsen T.M."/>
            <person name="Yang Q."/>
            <person name="Zafar N."/>
            <person name="Ward N.L."/>
        </authorList>
    </citation>
    <scope>NUCLEOTIDE SEQUENCE [LARGE SCALE GENOMIC DNA]</scope>
    <source>
        <strain>ATCC 15444</strain>
    </source>
</reference>
<protein>
    <recommendedName>
        <fullName evidence="1">Small ribosomal subunit protein uS10</fullName>
    </recommendedName>
    <alternativeName>
        <fullName evidence="2">30S ribosomal protein S10</fullName>
    </alternativeName>
</protein>
<sequence>MERQNIRIRLKAFDHRALDMSAKEIVNTAKRTGAEVRGPVPLPTRIERFTVNRSPHIDKKSREQFEIRTHTRILDIVDPTPQTVDALMKLDLSSGVGIEIKLEGAR</sequence>
<dbReference type="EMBL" id="CP000158">
    <property type="protein sequence ID" value="ABI76928.1"/>
    <property type="molecule type" value="Genomic_DNA"/>
</dbReference>
<dbReference type="RefSeq" id="WP_011647827.1">
    <property type="nucleotide sequence ID" value="NC_008358.1"/>
</dbReference>
<dbReference type="SMR" id="Q0BYB3"/>
<dbReference type="STRING" id="228405.HNE_2852"/>
<dbReference type="KEGG" id="hne:HNE_2852"/>
<dbReference type="eggNOG" id="COG0051">
    <property type="taxonomic scope" value="Bacteria"/>
</dbReference>
<dbReference type="HOGENOM" id="CLU_122625_1_3_5"/>
<dbReference type="Proteomes" id="UP000001959">
    <property type="component" value="Chromosome"/>
</dbReference>
<dbReference type="GO" id="GO:1990904">
    <property type="term" value="C:ribonucleoprotein complex"/>
    <property type="evidence" value="ECO:0007669"/>
    <property type="project" value="UniProtKB-KW"/>
</dbReference>
<dbReference type="GO" id="GO:0005840">
    <property type="term" value="C:ribosome"/>
    <property type="evidence" value="ECO:0007669"/>
    <property type="project" value="UniProtKB-KW"/>
</dbReference>
<dbReference type="GO" id="GO:0003735">
    <property type="term" value="F:structural constituent of ribosome"/>
    <property type="evidence" value="ECO:0007669"/>
    <property type="project" value="InterPro"/>
</dbReference>
<dbReference type="GO" id="GO:0000049">
    <property type="term" value="F:tRNA binding"/>
    <property type="evidence" value="ECO:0007669"/>
    <property type="project" value="UniProtKB-UniRule"/>
</dbReference>
<dbReference type="GO" id="GO:0006412">
    <property type="term" value="P:translation"/>
    <property type="evidence" value="ECO:0007669"/>
    <property type="project" value="UniProtKB-UniRule"/>
</dbReference>
<dbReference type="FunFam" id="3.30.70.600:FF:000001">
    <property type="entry name" value="30S ribosomal protein S10"/>
    <property type="match status" value="1"/>
</dbReference>
<dbReference type="Gene3D" id="3.30.70.600">
    <property type="entry name" value="Ribosomal protein S10 domain"/>
    <property type="match status" value="1"/>
</dbReference>
<dbReference type="HAMAP" id="MF_00508">
    <property type="entry name" value="Ribosomal_uS10"/>
    <property type="match status" value="1"/>
</dbReference>
<dbReference type="InterPro" id="IPR001848">
    <property type="entry name" value="Ribosomal_uS10"/>
</dbReference>
<dbReference type="InterPro" id="IPR018268">
    <property type="entry name" value="Ribosomal_uS10_CS"/>
</dbReference>
<dbReference type="InterPro" id="IPR027486">
    <property type="entry name" value="Ribosomal_uS10_dom"/>
</dbReference>
<dbReference type="InterPro" id="IPR036838">
    <property type="entry name" value="Ribosomal_uS10_dom_sf"/>
</dbReference>
<dbReference type="NCBIfam" id="NF001861">
    <property type="entry name" value="PRK00596.1"/>
    <property type="match status" value="1"/>
</dbReference>
<dbReference type="NCBIfam" id="TIGR01049">
    <property type="entry name" value="rpsJ_bact"/>
    <property type="match status" value="1"/>
</dbReference>
<dbReference type="PANTHER" id="PTHR11700">
    <property type="entry name" value="30S RIBOSOMAL PROTEIN S10 FAMILY MEMBER"/>
    <property type="match status" value="1"/>
</dbReference>
<dbReference type="Pfam" id="PF00338">
    <property type="entry name" value="Ribosomal_S10"/>
    <property type="match status" value="1"/>
</dbReference>
<dbReference type="PRINTS" id="PR00971">
    <property type="entry name" value="RIBOSOMALS10"/>
</dbReference>
<dbReference type="SMART" id="SM01403">
    <property type="entry name" value="Ribosomal_S10"/>
    <property type="match status" value="1"/>
</dbReference>
<dbReference type="SUPFAM" id="SSF54999">
    <property type="entry name" value="Ribosomal protein S10"/>
    <property type="match status" value="1"/>
</dbReference>
<dbReference type="PROSITE" id="PS00361">
    <property type="entry name" value="RIBOSOMAL_S10"/>
    <property type="match status" value="1"/>
</dbReference>
<evidence type="ECO:0000255" key="1">
    <source>
        <dbReference type="HAMAP-Rule" id="MF_00508"/>
    </source>
</evidence>
<evidence type="ECO:0000305" key="2"/>
<accession>Q0BYB3</accession>